<dbReference type="EC" id="3.6.1.23" evidence="2"/>
<dbReference type="EMBL" id="X74263">
    <property type="protein sequence ID" value="CAA52322.1"/>
    <property type="molecule type" value="Genomic_DNA"/>
</dbReference>
<dbReference type="EMBL" id="L20296">
    <property type="protein sequence ID" value="AAA65611.1"/>
    <property type="molecule type" value="Genomic_DNA"/>
</dbReference>
<dbReference type="EMBL" id="Z36121">
    <property type="protein sequence ID" value="CAA85215.1"/>
    <property type="molecule type" value="Genomic_DNA"/>
</dbReference>
<dbReference type="EMBL" id="AY693064">
    <property type="protein sequence ID" value="AAT93083.1"/>
    <property type="molecule type" value="Genomic_DNA"/>
</dbReference>
<dbReference type="EMBL" id="BK006936">
    <property type="protein sequence ID" value="DAA07368.1"/>
    <property type="molecule type" value="Genomic_DNA"/>
</dbReference>
<dbReference type="PIR" id="S38189">
    <property type="entry name" value="S38189"/>
</dbReference>
<dbReference type="RefSeq" id="NP_009811.3">
    <property type="nucleotide sequence ID" value="NM_001178600.3"/>
</dbReference>
<dbReference type="PDB" id="3F4F">
    <property type="method" value="X-ray"/>
    <property type="resolution" value="2.00 A"/>
    <property type="chains" value="A/B/C=1-147"/>
</dbReference>
<dbReference type="PDB" id="3HHQ">
    <property type="method" value="X-ray"/>
    <property type="resolution" value="2.00 A"/>
    <property type="chains" value="A/B/C/D/E/F/G/H/I/J/K/L/M/N/O/P/Q/R/S/T/U/V/W/X=1-147"/>
</dbReference>
<dbReference type="PDB" id="3P48">
    <property type="method" value="X-ray"/>
    <property type="resolution" value="1.67 A"/>
    <property type="chains" value="A/B/C=1-147"/>
</dbReference>
<dbReference type="PDBsum" id="3F4F"/>
<dbReference type="PDBsum" id="3HHQ"/>
<dbReference type="PDBsum" id="3P48"/>
<dbReference type="SMR" id="P33317"/>
<dbReference type="BioGRID" id="32947">
    <property type="interactions" value="103"/>
</dbReference>
<dbReference type="DIP" id="DIP-1661N"/>
<dbReference type="FunCoup" id="P33317">
    <property type="interactions" value="1439"/>
</dbReference>
<dbReference type="IntAct" id="P33317">
    <property type="interactions" value="5"/>
</dbReference>
<dbReference type="MINT" id="P33317"/>
<dbReference type="STRING" id="4932.YBR252W"/>
<dbReference type="iPTMnet" id="P33317"/>
<dbReference type="PaxDb" id="4932-YBR252W"/>
<dbReference type="PeptideAtlas" id="P33317"/>
<dbReference type="EnsemblFungi" id="YBR252W_mRNA">
    <property type="protein sequence ID" value="YBR252W"/>
    <property type="gene ID" value="YBR252W"/>
</dbReference>
<dbReference type="GeneID" id="852554"/>
<dbReference type="KEGG" id="sce:YBR252W"/>
<dbReference type="AGR" id="SGD:S000000456"/>
<dbReference type="SGD" id="S000000456">
    <property type="gene designation" value="DUT1"/>
</dbReference>
<dbReference type="VEuPathDB" id="FungiDB:YBR252W"/>
<dbReference type="eggNOG" id="KOG3370">
    <property type="taxonomic scope" value="Eukaryota"/>
</dbReference>
<dbReference type="GeneTree" id="ENSGT00390000018390"/>
<dbReference type="HOGENOM" id="CLU_068508_2_1_1"/>
<dbReference type="InParanoid" id="P33317"/>
<dbReference type="OMA" id="RSGMGHK"/>
<dbReference type="OrthoDB" id="419889at2759"/>
<dbReference type="BioCyc" id="YEAST:YBR252W-MONOMER"/>
<dbReference type="BRENDA" id="3.6.1.23">
    <property type="organism ID" value="984"/>
</dbReference>
<dbReference type="Reactome" id="R-SCE-499943">
    <property type="pathway name" value="Interconversion of nucleotide di- and triphosphates"/>
</dbReference>
<dbReference type="UniPathway" id="UPA00610">
    <property type="reaction ID" value="UER00666"/>
</dbReference>
<dbReference type="BioGRID-ORCS" id="852554">
    <property type="hits" value="0 hits in 10 CRISPR screens"/>
</dbReference>
<dbReference type="EvolutionaryTrace" id="P33317"/>
<dbReference type="PRO" id="PR:P33317"/>
<dbReference type="Proteomes" id="UP000002311">
    <property type="component" value="Chromosome II"/>
</dbReference>
<dbReference type="RNAct" id="P33317">
    <property type="molecule type" value="protein"/>
</dbReference>
<dbReference type="GO" id="GO:0005737">
    <property type="term" value="C:cytoplasm"/>
    <property type="evidence" value="ECO:0007005"/>
    <property type="project" value="SGD"/>
</dbReference>
<dbReference type="GO" id="GO:0005634">
    <property type="term" value="C:nucleus"/>
    <property type="evidence" value="ECO:0007005"/>
    <property type="project" value="SGD"/>
</dbReference>
<dbReference type="GO" id="GO:0035870">
    <property type="term" value="F:dITP diphosphatase activity"/>
    <property type="evidence" value="ECO:0000314"/>
    <property type="project" value="SGD"/>
</dbReference>
<dbReference type="GO" id="GO:0004170">
    <property type="term" value="F:dUTP diphosphatase activity"/>
    <property type="evidence" value="ECO:0000314"/>
    <property type="project" value="SGD"/>
</dbReference>
<dbReference type="GO" id="GO:0000287">
    <property type="term" value="F:magnesium ion binding"/>
    <property type="evidence" value="ECO:0000318"/>
    <property type="project" value="GO_Central"/>
</dbReference>
<dbReference type="GO" id="GO:0035863">
    <property type="term" value="P:dITP catabolic process"/>
    <property type="evidence" value="ECO:0000314"/>
    <property type="project" value="SGD"/>
</dbReference>
<dbReference type="GO" id="GO:0006226">
    <property type="term" value="P:dUMP biosynthetic process"/>
    <property type="evidence" value="ECO:0000318"/>
    <property type="project" value="GO_Central"/>
</dbReference>
<dbReference type="GO" id="GO:0046081">
    <property type="term" value="P:dUTP catabolic process"/>
    <property type="evidence" value="ECO:0000314"/>
    <property type="project" value="SGD"/>
</dbReference>
<dbReference type="GO" id="GO:0009213">
    <property type="term" value="P:pyrimidine deoxyribonucleoside triphosphate catabolic process"/>
    <property type="evidence" value="ECO:0000315"/>
    <property type="project" value="SGD"/>
</dbReference>
<dbReference type="CDD" id="cd07557">
    <property type="entry name" value="trimeric_dUTPase"/>
    <property type="match status" value="1"/>
</dbReference>
<dbReference type="FunFam" id="2.70.40.10:FF:000007">
    <property type="entry name" value="dUTP pyrophosphatase"/>
    <property type="match status" value="1"/>
</dbReference>
<dbReference type="Gene3D" id="2.70.40.10">
    <property type="match status" value="1"/>
</dbReference>
<dbReference type="InterPro" id="IPR008181">
    <property type="entry name" value="dUTPase"/>
</dbReference>
<dbReference type="InterPro" id="IPR029054">
    <property type="entry name" value="dUTPase-like"/>
</dbReference>
<dbReference type="InterPro" id="IPR036157">
    <property type="entry name" value="dUTPase-like_sf"/>
</dbReference>
<dbReference type="InterPro" id="IPR033704">
    <property type="entry name" value="dUTPase_trimeric"/>
</dbReference>
<dbReference type="NCBIfam" id="TIGR00576">
    <property type="entry name" value="dut"/>
    <property type="match status" value="1"/>
</dbReference>
<dbReference type="NCBIfam" id="NF001862">
    <property type="entry name" value="PRK00601.1"/>
    <property type="match status" value="1"/>
</dbReference>
<dbReference type="PANTHER" id="PTHR11241">
    <property type="entry name" value="DEOXYURIDINE 5'-TRIPHOSPHATE NUCLEOTIDOHYDROLASE"/>
    <property type="match status" value="1"/>
</dbReference>
<dbReference type="PANTHER" id="PTHR11241:SF0">
    <property type="entry name" value="DEOXYURIDINE 5'-TRIPHOSPHATE NUCLEOTIDOHYDROLASE"/>
    <property type="match status" value="1"/>
</dbReference>
<dbReference type="Pfam" id="PF00692">
    <property type="entry name" value="dUTPase"/>
    <property type="match status" value="1"/>
</dbReference>
<dbReference type="SUPFAM" id="SSF51283">
    <property type="entry name" value="dUTPase-like"/>
    <property type="match status" value="1"/>
</dbReference>
<sequence length="147" mass="15307">MTATSDKVLKIQLRSASATVPTKGSATAAGYDIYASQDITIPAMGQGMVSTDISFTVPVGTYGRIAPRSGLAVKNGIQTGAGVVDRDYTGEVKVVLFNHSQRDFAIKKGDRVAQLILEKIVDDAQIVVVDSLEESARGAGGFGSTGN</sequence>
<name>DUT_YEAST</name>
<keyword id="KW-0002">3D-structure</keyword>
<keyword id="KW-0378">Hydrolase</keyword>
<keyword id="KW-0460">Magnesium</keyword>
<keyword id="KW-0479">Metal-binding</keyword>
<keyword id="KW-0546">Nucleotide metabolism</keyword>
<keyword id="KW-1185">Reference proteome</keyword>
<proteinExistence type="evidence at protein level"/>
<evidence type="ECO:0000269" key="1">
    <source>
    </source>
</evidence>
<evidence type="ECO:0000269" key="2">
    <source>
    </source>
</evidence>
<evidence type="ECO:0000269" key="3">
    <source>
    </source>
</evidence>
<evidence type="ECO:0000303" key="4">
    <source>
    </source>
</evidence>
<evidence type="ECO:0000305" key="5"/>
<evidence type="ECO:0007744" key="6">
    <source>
        <dbReference type="PDB" id="3F4F"/>
    </source>
</evidence>
<evidence type="ECO:0007744" key="7">
    <source>
        <dbReference type="PDB" id="3HHQ"/>
    </source>
</evidence>
<evidence type="ECO:0007744" key="8">
    <source>
        <dbReference type="PDB" id="3P48"/>
    </source>
</evidence>
<evidence type="ECO:0007829" key="9">
    <source>
        <dbReference type="PDB" id="3F4F"/>
    </source>
</evidence>
<evidence type="ECO:0007829" key="10">
    <source>
        <dbReference type="PDB" id="3P48"/>
    </source>
</evidence>
<reference key="1">
    <citation type="journal article" date="1993" name="EMBO J.">
        <title>dUTP pyrophosphatase is an essential enzyme in Saccharomyces cerevisiae.</title>
        <authorList>
            <person name="Gadsden M.H."/>
            <person name="McIntosh E.M."/>
            <person name="Game J.C."/>
            <person name="Wilson P.J."/>
            <person name="Haynes R.H."/>
        </authorList>
    </citation>
    <scope>NUCLEOTIDE SEQUENCE [GENOMIC DNA]</scope>
    <scope>FUNCTION</scope>
    <scope>DISRUPTION PHENOTYPE</scope>
</reference>
<reference key="2">
    <citation type="journal article" date="1993" name="Yeast">
        <title>The complete sequence of a 6794 bp segment located on the right arm of chromosome II of Saccharomyces cerevisiae. Finding of a putative dUTPase in a yeast.</title>
        <authorList>
            <person name="Doignon F."/>
            <person name="Biteau N."/>
            <person name="Aigle M."/>
            <person name="Crouzet M."/>
        </authorList>
    </citation>
    <scope>NUCLEOTIDE SEQUENCE [GENOMIC DNA]</scope>
    <source>
        <strain>ATCC 204508 / S288c</strain>
    </source>
</reference>
<reference key="3">
    <citation type="journal article" date="1994" name="EMBO J.">
        <title>Complete DNA sequence of yeast chromosome II.</title>
        <authorList>
            <person name="Feldmann H."/>
            <person name="Aigle M."/>
            <person name="Aljinovic G."/>
            <person name="Andre B."/>
            <person name="Baclet M.C."/>
            <person name="Barthe C."/>
            <person name="Baur A."/>
            <person name="Becam A.-M."/>
            <person name="Biteau N."/>
            <person name="Boles E."/>
            <person name="Brandt T."/>
            <person name="Brendel M."/>
            <person name="Brueckner M."/>
            <person name="Bussereau F."/>
            <person name="Christiansen C."/>
            <person name="Contreras R."/>
            <person name="Crouzet M."/>
            <person name="Cziepluch C."/>
            <person name="Demolis N."/>
            <person name="Delaveau T."/>
            <person name="Doignon F."/>
            <person name="Domdey H."/>
            <person name="Duesterhus S."/>
            <person name="Dubois E."/>
            <person name="Dujon B."/>
            <person name="El Bakkoury M."/>
            <person name="Entian K.-D."/>
            <person name="Feuermann M."/>
            <person name="Fiers W."/>
            <person name="Fobo G.M."/>
            <person name="Fritz C."/>
            <person name="Gassenhuber J."/>
            <person name="Glansdorff N."/>
            <person name="Goffeau A."/>
            <person name="Grivell L.A."/>
            <person name="de Haan M."/>
            <person name="Hein C."/>
            <person name="Herbert C.J."/>
            <person name="Hollenberg C.P."/>
            <person name="Holmstroem K."/>
            <person name="Jacq C."/>
            <person name="Jacquet M."/>
            <person name="Jauniaux J.-C."/>
            <person name="Jonniaux J.-L."/>
            <person name="Kallesoee T."/>
            <person name="Kiesau P."/>
            <person name="Kirchrath L."/>
            <person name="Koetter P."/>
            <person name="Korol S."/>
            <person name="Liebl S."/>
            <person name="Logghe M."/>
            <person name="Lohan A.J.E."/>
            <person name="Louis E.J."/>
            <person name="Li Z.Y."/>
            <person name="Maat M.J."/>
            <person name="Mallet L."/>
            <person name="Mannhaupt G."/>
            <person name="Messenguy F."/>
            <person name="Miosga T."/>
            <person name="Molemans F."/>
            <person name="Mueller S."/>
            <person name="Nasr F."/>
            <person name="Obermaier B."/>
            <person name="Perea J."/>
            <person name="Pierard A."/>
            <person name="Piravandi E."/>
            <person name="Pohl F.M."/>
            <person name="Pohl T.M."/>
            <person name="Potier S."/>
            <person name="Proft M."/>
            <person name="Purnelle B."/>
            <person name="Ramezani Rad M."/>
            <person name="Rieger M."/>
            <person name="Rose M."/>
            <person name="Schaaff-Gerstenschlaeger I."/>
            <person name="Scherens B."/>
            <person name="Schwarzlose C."/>
            <person name="Skala J."/>
            <person name="Slonimski P.P."/>
            <person name="Smits P.H.M."/>
            <person name="Souciet J.-L."/>
            <person name="Steensma H.Y."/>
            <person name="Stucka R."/>
            <person name="Urrestarazu L.A."/>
            <person name="van der Aart Q.J.M."/>
            <person name="Van Dyck L."/>
            <person name="Vassarotti A."/>
            <person name="Vetter I."/>
            <person name="Vierendeels F."/>
            <person name="Vissers S."/>
            <person name="Wagner G."/>
            <person name="de Wergifosse P."/>
            <person name="Wolfe K.H."/>
            <person name="Zagulski M."/>
            <person name="Zimmermann F.K."/>
            <person name="Mewes H.-W."/>
            <person name="Kleine K."/>
        </authorList>
    </citation>
    <scope>NUCLEOTIDE SEQUENCE [LARGE SCALE GENOMIC DNA]</scope>
    <source>
        <strain>ATCC 204508 / S288c</strain>
    </source>
</reference>
<reference key="4">
    <citation type="journal article" date="2014" name="G3 (Bethesda)">
        <title>The reference genome sequence of Saccharomyces cerevisiae: Then and now.</title>
        <authorList>
            <person name="Engel S.R."/>
            <person name="Dietrich F.S."/>
            <person name="Fisk D.G."/>
            <person name="Binkley G."/>
            <person name="Balakrishnan R."/>
            <person name="Costanzo M.C."/>
            <person name="Dwight S.S."/>
            <person name="Hitz B.C."/>
            <person name="Karra K."/>
            <person name="Nash R.S."/>
            <person name="Weng S."/>
            <person name="Wong E.D."/>
            <person name="Lloyd P."/>
            <person name="Skrzypek M.S."/>
            <person name="Miyasato S.R."/>
            <person name="Simison M."/>
            <person name="Cherry J.M."/>
        </authorList>
    </citation>
    <scope>GENOME REANNOTATION</scope>
    <source>
        <strain>ATCC 204508 / S288c</strain>
    </source>
</reference>
<reference key="5">
    <citation type="journal article" date="2007" name="Genome Res.">
        <title>Approaching a complete repository of sequence-verified protein-encoding clones for Saccharomyces cerevisiae.</title>
        <authorList>
            <person name="Hu Y."/>
            <person name="Rolfs A."/>
            <person name="Bhullar B."/>
            <person name="Murthy T.V.S."/>
            <person name="Zhu C."/>
            <person name="Berger M.F."/>
            <person name="Camargo A.A."/>
            <person name="Kelley F."/>
            <person name="McCarron S."/>
            <person name="Jepson D."/>
            <person name="Richardson A."/>
            <person name="Raphael J."/>
            <person name="Moreira D."/>
            <person name="Taycher E."/>
            <person name="Zuo D."/>
            <person name="Mohr S."/>
            <person name="Kane M.F."/>
            <person name="Williamson J."/>
            <person name="Simpson A.J.G."/>
            <person name="Bulyk M.L."/>
            <person name="Harlow E."/>
            <person name="Marsischky G."/>
            <person name="Kolodner R.D."/>
            <person name="LaBaer J."/>
        </authorList>
    </citation>
    <scope>NUCLEOTIDE SEQUENCE [GENOMIC DNA]</scope>
    <source>
        <strain>ATCC 204508 / S288c</strain>
    </source>
</reference>
<reference key="6">
    <citation type="journal article" date="2003" name="Nature">
        <title>Global analysis of protein expression in yeast.</title>
        <authorList>
            <person name="Ghaemmaghami S."/>
            <person name="Huh W.-K."/>
            <person name="Bower K."/>
            <person name="Howson R.W."/>
            <person name="Belle A."/>
            <person name="Dephoure N."/>
            <person name="O'Shea E.K."/>
            <person name="Weissman J.S."/>
        </authorList>
    </citation>
    <scope>LEVEL OF PROTEIN EXPRESSION [LARGE SCALE ANALYSIS]</scope>
</reference>
<reference key="7">
    <citation type="journal article" date="2012" name="Proc. Natl. Acad. Sci. U.S.A.">
        <title>N-terminal acetylome analyses and functional insights of the N-terminal acetyltransferase NatB.</title>
        <authorList>
            <person name="Van Damme P."/>
            <person name="Lasa M."/>
            <person name="Polevoda B."/>
            <person name="Gazquez C."/>
            <person name="Elosegui-Artola A."/>
            <person name="Kim D.S."/>
            <person name="De Juan-Pardo E."/>
            <person name="Demeyer K."/>
            <person name="Hole K."/>
            <person name="Larrea E."/>
            <person name="Timmerman E."/>
            <person name="Prieto J."/>
            <person name="Arnesen T."/>
            <person name="Sherman F."/>
            <person name="Gevaert K."/>
            <person name="Aldabe R."/>
        </authorList>
    </citation>
    <scope>IDENTIFICATION BY MASS SPECTROMETRY [LARGE SCALE ANALYSIS]</scope>
</reference>
<reference evidence="6 7 8" key="8">
    <citation type="journal article" date="2011" name="Biochem. J.">
        <title>Structure and activity of the Saccharomyces cerevisiae dUTP pyrophosphatase DUT1, an essential housekeeping enzyme.</title>
        <authorList>
            <person name="Tchigvintsev A."/>
            <person name="Singer A.U."/>
            <person name="Flick R."/>
            <person name="Petit P."/>
            <person name="Brown G."/>
            <person name="Evdokimova E."/>
            <person name="Savchenko A."/>
            <person name="Yakunin A.F."/>
        </authorList>
    </citation>
    <scope>X-RAY CRYSTALLOGRAPHY (1.67 ANGSTROMS) IN COMPLEX WITH DUMP</scope>
    <scope>SUBUNIT</scope>
    <scope>FUNCTION</scope>
    <scope>COFACTOR</scope>
    <scope>CATALYTIC ACTIVITY</scope>
    <scope>BIOPHYSICOCHEMICAL PROPERTIES</scope>
    <scope>PATHWAY</scope>
    <scope>MUTAGENESIS OF ASP-32; ARG-68; SER-69; ASP-85; ASP-87; TYR-88; ARG-111; GLN-114; ARG-137 AND PHE-142</scope>
</reference>
<accession>P33317</accession>
<accession>D6VQP8</accession>
<comment type="function">
    <text evidence="2 3">Involved in nucleotide metabolism via production of dUMP, the immediate precursor of thymidine nucleotides, and decreases the intracellular concentration of dUTP so that uracil cannot be incorporated into DNA (PubMed:21548881, PubMed:8223452). Shows a significant activity against dITP, another potentially mutagenic nucleotide (PubMed:21548881).</text>
</comment>
<comment type="catalytic activity">
    <reaction evidence="2">
        <text>dUTP + H2O = dUMP + diphosphate + H(+)</text>
        <dbReference type="Rhea" id="RHEA:10248"/>
        <dbReference type="ChEBI" id="CHEBI:15377"/>
        <dbReference type="ChEBI" id="CHEBI:15378"/>
        <dbReference type="ChEBI" id="CHEBI:33019"/>
        <dbReference type="ChEBI" id="CHEBI:61555"/>
        <dbReference type="ChEBI" id="CHEBI:246422"/>
        <dbReference type="EC" id="3.6.1.23"/>
    </reaction>
    <physiologicalReaction direction="left-to-right" evidence="2">
        <dbReference type="Rhea" id="RHEA:10249"/>
    </physiologicalReaction>
</comment>
<comment type="cofactor">
    <cofactor evidence="2">
        <name>Mg(2+)</name>
        <dbReference type="ChEBI" id="CHEBI:18420"/>
    </cofactor>
</comment>
<comment type="biophysicochemical properties">
    <kinetics>
        <KM evidence="2">44 uM for dITP</KM>
        <KM evidence="2">13.2 uM for dUTP</KM>
        <Vmax evidence="2">4.4 umol/min/mg enzyme with dITP as substrate</Vmax>
        <Vmax evidence="2">31.7 umol/min/mg enzyme with dUTP as substrate</Vmax>
    </kinetics>
    <phDependence>
        <text evidence="2">Optimum pH is 7.0-9.0.</text>
    </phDependence>
</comment>
<comment type="pathway">
    <text evidence="2">Pyrimidine metabolism; dUMP biosynthesis; dUMP from dCTP (dUTP route): step 2/2.</text>
</comment>
<comment type="subunit">
    <text evidence="2">Homotrimer.</text>
</comment>
<comment type="disruption phenotype">
    <text evidence="3">Leads to dTMP auxotrophy.</text>
</comment>
<comment type="miscellaneous">
    <text evidence="1">Present with 4340 molecules/cell in log phase SD medium.</text>
</comment>
<comment type="miscellaneous">
    <text evidence="2">Each trimer binds three substrate molecules. The ligands are bound between subunits, and for each substrate molecule, residues from adjacent subunits contribute to the binding interactions.</text>
</comment>
<comment type="similarity">
    <text evidence="5">Belongs to the dUTPase family.</text>
</comment>
<feature type="chain" id="PRO_0000182937" description="Deoxyuridine 5'-triphosphate nucleotidohydrolase">
    <location>
        <begin position="1"/>
        <end position="147"/>
    </location>
</feature>
<feature type="binding site" evidence="2 6">
    <location>
        <position position="69"/>
    </location>
    <ligand>
        <name>dUMP</name>
        <dbReference type="ChEBI" id="CHEBI:246422"/>
    </ligand>
</feature>
<feature type="binding site" evidence="2 6">
    <location>
        <position position="82"/>
    </location>
    <ligand>
        <name>dUMP</name>
        <dbReference type="ChEBI" id="CHEBI:246422"/>
    </ligand>
</feature>
<feature type="binding site" evidence="2 6">
    <location>
        <position position="85"/>
    </location>
    <ligand>
        <name>dUMP</name>
        <dbReference type="ChEBI" id="CHEBI:246422"/>
    </ligand>
</feature>
<feature type="binding site" evidence="2 6">
    <location>
        <position position="88"/>
    </location>
    <ligand>
        <name>dUMP</name>
        <dbReference type="ChEBI" id="CHEBI:246422"/>
    </ligand>
</feature>
<feature type="binding site" evidence="2 6">
    <location>
        <position position="93"/>
    </location>
    <ligand>
        <name>dUMP</name>
        <dbReference type="ChEBI" id="CHEBI:246422"/>
    </ligand>
</feature>
<feature type="binding site" evidence="2 6">
    <location>
        <position position="137"/>
    </location>
    <ligand>
        <name>dUMP</name>
        <dbReference type="ChEBI" id="CHEBI:246422"/>
    </ligand>
</feature>
<feature type="binding site" evidence="2 6">
    <location>
        <position position="142"/>
    </location>
    <ligand>
        <name>dUMP</name>
        <dbReference type="ChEBI" id="CHEBI:246422"/>
    </ligand>
</feature>
<feature type="binding site" evidence="2 6">
    <location>
        <position position="143"/>
    </location>
    <ligand>
        <name>dUMP</name>
        <dbReference type="ChEBI" id="CHEBI:246422"/>
    </ligand>
</feature>
<feature type="mutagenesis site" description="Exhibits negligible activity." evidence="2">
    <original>D</original>
    <variation>A</variation>
    <location>
        <position position="32"/>
    </location>
</feature>
<feature type="mutagenesis site" description="Exhibits very low activity." evidence="2">
    <original>R</original>
    <variation>A</variation>
    <location>
        <position position="68"/>
    </location>
</feature>
<feature type="mutagenesis site" description="Exhibits negligible activity." evidence="2">
    <original>S</original>
    <variation>A</variation>
    <location>
        <position position="69"/>
    </location>
</feature>
<feature type="mutagenesis site" description="Exhibits negligible activity." evidence="2">
    <original>D</original>
    <variation>A</variation>
    <location>
        <position position="85"/>
    </location>
</feature>
<feature type="mutagenesis site" description="Exhibits negligible activity." evidence="2">
    <original>D</original>
    <variation>A</variation>
    <location>
        <position position="87"/>
    </location>
</feature>
<feature type="mutagenesis site" description="Exhibits reduced activity and lower substrate affinity." evidence="2">
    <original>Y</original>
    <variation>A</variation>
    <location>
        <position position="88"/>
    </location>
</feature>
<feature type="mutagenesis site" description="Exhibits reduced activity and lower substrate affinity." evidence="2">
    <original>R</original>
    <variation>A</variation>
    <location>
        <position position="111"/>
    </location>
</feature>
<feature type="mutagenesis site" description="Does not affect the affinity for dUTP but greatly reduces activity." evidence="2">
    <original>Q</original>
    <variation>A</variation>
    <location>
        <position position="114"/>
    </location>
</feature>
<feature type="mutagenesis site" description="Exhibits negligible activity." evidence="2">
    <original>R</original>
    <variation>A</variation>
    <location>
        <position position="137"/>
    </location>
</feature>
<feature type="mutagenesis site" description="Exhibits very low activity." evidence="2">
    <original>F</original>
    <variation>A</variation>
    <location>
        <position position="142"/>
    </location>
</feature>
<feature type="sequence conflict" description="In Ref. 1; CAA52322." evidence="5" ref="1">
    <original>K</original>
    <variation>N</variation>
    <location>
        <position position="10"/>
    </location>
</feature>
<feature type="strand" evidence="10">
    <location>
        <begin position="8"/>
        <end position="13"/>
    </location>
</feature>
<feature type="strand" evidence="10">
    <location>
        <begin position="22"/>
        <end position="25"/>
    </location>
</feature>
<feature type="strand" evidence="10">
    <location>
        <begin position="29"/>
        <end position="34"/>
    </location>
</feature>
<feature type="strand" evidence="10">
    <location>
        <begin position="39"/>
        <end position="41"/>
    </location>
</feature>
<feature type="strand" evidence="10">
    <location>
        <begin position="45"/>
        <end position="50"/>
    </location>
</feature>
<feature type="strand" evidence="10">
    <location>
        <begin position="53"/>
        <end position="56"/>
    </location>
</feature>
<feature type="strand" evidence="10">
    <location>
        <begin position="61"/>
        <end position="66"/>
    </location>
</feature>
<feature type="helix" evidence="10">
    <location>
        <begin position="69"/>
        <end position="75"/>
    </location>
</feature>
<feature type="strand" evidence="10">
    <location>
        <begin position="77"/>
        <end position="79"/>
    </location>
</feature>
<feature type="strand" evidence="10">
    <location>
        <begin position="93"/>
        <end position="98"/>
    </location>
</feature>
<feature type="strand" evidence="10">
    <location>
        <begin position="100"/>
        <end position="102"/>
    </location>
</feature>
<feature type="strand" evidence="10">
    <location>
        <begin position="104"/>
        <end position="106"/>
    </location>
</feature>
<feature type="strand" evidence="10">
    <location>
        <begin position="111"/>
        <end position="120"/>
    </location>
</feature>
<feature type="strand" evidence="10">
    <location>
        <begin position="125"/>
        <end position="128"/>
    </location>
</feature>
<feature type="strand" evidence="9">
    <location>
        <begin position="136"/>
        <end position="138"/>
    </location>
</feature>
<organism>
    <name type="scientific">Saccharomyces cerevisiae (strain ATCC 204508 / S288c)</name>
    <name type="common">Baker's yeast</name>
    <dbReference type="NCBI Taxonomy" id="559292"/>
    <lineage>
        <taxon>Eukaryota</taxon>
        <taxon>Fungi</taxon>
        <taxon>Dikarya</taxon>
        <taxon>Ascomycota</taxon>
        <taxon>Saccharomycotina</taxon>
        <taxon>Saccharomycetes</taxon>
        <taxon>Saccharomycetales</taxon>
        <taxon>Saccharomycetaceae</taxon>
        <taxon>Saccharomyces</taxon>
    </lineage>
</organism>
<protein>
    <recommendedName>
        <fullName evidence="4">Deoxyuridine 5'-triphosphate nucleotidohydrolase</fullName>
        <shortName evidence="4">dUTPase</shortName>
        <ecNumber evidence="2">3.6.1.23</ecNumber>
    </recommendedName>
    <alternativeName>
        <fullName evidence="4">dUTP pyrophosphatase</fullName>
    </alternativeName>
</protein>
<gene>
    <name evidence="4" type="primary">DUT1</name>
    <name type="ordered locus">YBR252W</name>
    <name type="ORF">YBR1705</name>
</gene>